<keyword id="KW-1185">Reference proteome</keyword>
<keyword id="KW-0687">Ribonucleoprotein</keyword>
<keyword id="KW-0689">Ribosomal protein</keyword>
<keyword id="KW-0694">RNA-binding</keyword>
<keyword id="KW-0699">rRNA-binding</keyword>
<reference key="1">
    <citation type="submission" date="2007-10" db="EMBL/GenBank/DDBJ databases">
        <title>Complete sequence of chromosome 1 of Burkholderia multivorans ATCC 17616.</title>
        <authorList>
            <person name="Copeland A."/>
            <person name="Lucas S."/>
            <person name="Lapidus A."/>
            <person name="Barry K."/>
            <person name="Glavina del Rio T."/>
            <person name="Dalin E."/>
            <person name="Tice H."/>
            <person name="Pitluck S."/>
            <person name="Chain P."/>
            <person name="Malfatti S."/>
            <person name="Shin M."/>
            <person name="Vergez L."/>
            <person name="Schmutz J."/>
            <person name="Larimer F."/>
            <person name="Land M."/>
            <person name="Hauser L."/>
            <person name="Kyrpides N."/>
            <person name="Kim E."/>
            <person name="Tiedje J."/>
            <person name="Richardson P."/>
        </authorList>
    </citation>
    <scope>NUCLEOTIDE SEQUENCE [LARGE SCALE GENOMIC DNA]</scope>
    <source>
        <strain>ATCC 17616 / 249</strain>
    </source>
</reference>
<reference key="2">
    <citation type="submission" date="2007-04" db="EMBL/GenBank/DDBJ databases">
        <title>Complete genome sequence of Burkholderia multivorans ATCC 17616.</title>
        <authorList>
            <person name="Ohtsubo Y."/>
            <person name="Yamashita A."/>
            <person name="Kurokawa K."/>
            <person name="Takami H."/>
            <person name="Yuhara S."/>
            <person name="Nishiyama E."/>
            <person name="Endo R."/>
            <person name="Miyazaki R."/>
            <person name="Ono A."/>
            <person name="Yano K."/>
            <person name="Ito M."/>
            <person name="Sota M."/>
            <person name="Yuji N."/>
            <person name="Hattori M."/>
            <person name="Tsuda M."/>
        </authorList>
    </citation>
    <scope>NUCLEOTIDE SEQUENCE [LARGE SCALE GENOMIC DNA]</scope>
    <source>
        <strain>ATCC 17616 / 249</strain>
    </source>
</reference>
<accession>A9AJW4</accession>
<comment type="function">
    <text evidence="1">Binds to the 23S rRNA.</text>
</comment>
<comment type="similarity">
    <text evidence="1">Belongs to the bacterial ribosomal protein bL9 family.</text>
</comment>
<gene>
    <name evidence="1" type="primary">rplI</name>
    <name type="ordered locus">Bmul_1403</name>
    <name type="ordered locus">BMULJ_01840</name>
</gene>
<protein>
    <recommendedName>
        <fullName evidence="1">Large ribosomal subunit protein bL9</fullName>
    </recommendedName>
    <alternativeName>
        <fullName evidence="2">50S ribosomal protein L9</fullName>
    </alternativeName>
</protein>
<dbReference type="EMBL" id="CP000868">
    <property type="protein sequence ID" value="ABX15091.1"/>
    <property type="molecule type" value="Genomic_DNA"/>
</dbReference>
<dbReference type="EMBL" id="AP009385">
    <property type="protein sequence ID" value="BAG43760.1"/>
    <property type="molecule type" value="Genomic_DNA"/>
</dbReference>
<dbReference type="RefSeq" id="WP_006402297.1">
    <property type="nucleotide sequence ID" value="NC_010804.1"/>
</dbReference>
<dbReference type="SMR" id="A9AJW4"/>
<dbReference type="STRING" id="395019.BMULJ_01840"/>
<dbReference type="GeneID" id="89570320"/>
<dbReference type="KEGG" id="bmj:BMULJ_01840"/>
<dbReference type="KEGG" id="bmu:Bmul_1403"/>
<dbReference type="eggNOG" id="COG0359">
    <property type="taxonomic scope" value="Bacteria"/>
</dbReference>
<dbReference type="HOGENOM" id="CLU_078938_4_1_4"/>
<dbReference type="Proteomes" id="UP000008815">
    <property type="component" value="Chromosome 1"/>
</dbReference>
<dbReference type="GO" id="GO:1990904">
    <property type="term" value="C:ribonucleoprotein complex"/>
    <property type="evidence" value="ECO:0007669"/>
    <property type="project" value="UniProtKB-KW"/>
</dbReference>
<dbReference type="GO" id="GO:0005840">
    <property type="term" value="C:ribosome"/>
    <property type="evidence" value="ECO:0007669"/>
    <property type="project" value="UniProtKB-KW"/>
</dbReference>
<dbReference type="GO" id="GO:0019843">
    <property type="term" value="F:rRNA binding"/>
    <property type="evidence" value="ECO:0007669"/>
    <property type="project" value="UniProtKB-UniRule"/>
</dbReference>
<dbReference type="GO" id="GO:0003735">
    <property type="term" value="F:structural constituent of ribosome"/>
    <property type="evidence" value="ECO:0007669"/>
    <property type="project" value="InterPro"/>
</dbReference>
<dbReference type="GO" id="GO:0006412">
    <property type="term" value="P:translation"/>
    <property type="evidence" value="ECO:0007669"/>
    <property type="project" value="UniProtKB-UniRule"/>
</dbReference>
<dbReference type="Gene3D" id="3.10.430.100">
    <property type="entry name" value="Ribosomal protein L9, C-terminal domain"/>
    <property type="match status" value="1"/>
</dbReference>
<dbReference type="Gene3D" id="3.40.5.10">
    <property type="entry name" value="Ribosomal protein L9, N-terminal domain"/>
    <property type="match status" value="1"/>
</dbReference>
<dbReference type="HAMAP" id="MF_00503">
    <property type="entry name" value="Ribosomal_bL9"/>
    <property type="match status" value="1"/>
</dbReference>
<dbReference type="InterPro" id="IPR000244">
    <property type="entry name" value="Ribosomal_bL9"/>
</dbReference>
<dbReference type="InterPro" id="IPR009027">
    <property type="entry name" value="Ribosomal_bL9/RNase_H1_N"/>
</dbReference>
<dbReference type="InterPro" id="IPR020594">
    <property type="entry name" value="Ribosomal_bL9_bac/chp"/>
</dbReference>
<dbReference type="InterPro" id="IPR020069">
    <property type="entry name" value="Ribosomal_bL9_C"/>
</dbReference>
<dbReference type="InterPro" id="IPR036791">
    <property type="entry name" value="Ribosomal_bL9_C_sf"/>
</dbReference>
<dbReference type="InterPro" id="IPR020070">
    <property type="entry name" value="Ribosomal_bL9_N"/>
</dbReference>
<dbReference type="InterPro" id="IPR036935">
    <property type="entry name" value="Ribosomal_bL9_N_sf"/>
</dbReference>
<dbReference type="NCBIfam" id="TIGR00158">
    <property type="entry name" value="L9"/>
    <property type="match status" value="1"/>
</dbReference>
<dbReference type="PANTHER" id="PTHR21368">
    <property type="entry name" value="50S RIBOSOMAL PROTEIN L9"/>
    <property type="match status" value="1"/>
</dbReference>
<dbReference type="Pfam" id="PF03948">
    <property type="entry name" value="Ribosomal_L9_C"/>
    <property type="match status" value="1"/>
</dbReference>
<dbReference type="Pfam" id="PF01281">
    <property type="entry name" value="Ribosomal_L9_N"/>
    <property type="match status" value="1"/>
</dbReference>
<dbReference type="SUPFAM" id="SSF55658">
    <property type="entry name" value="L9 N-domain-like"/>
    <property type="match status" value="1"/>
</dbReference>
<dbReference type="SUPFAM" id="SSF55653">
    <property type="entry name" value="Ribosomal protein L9 C-domain"/>
    <property type="match status" value="1"/>
</dbReference>
<dbReference type="PROSITE" id="PS00651">
    <property type="entry name" value="RIBOSOMAL_L9"/>
    <property type="match status" value="1"/>
</dbReference>
<name>RL9_BURM1</name>
<proteinExistence type="inferred from homology"/>
<sequence length="150" mass="16275">MQIILLEKVANLGNLGDIVKVKDGYARNFLIPNRKARRATKEAIAEFEVRRAELEKIAAEKLAASQAVGEKLNGQSFEITQKSGVDGRLFGSVTNADVAELLKKAGFDVEKSQVRMPEGPLKMIGEHGVQVALHTDVVVDVTINVIGDHA</sequence>
<evidence type="ECO:0000255" key="1">
    <source>
        <dbReference type="HAMAP-Rule" id="MF_00503"/>
    </source>
</evidence>
<evidence type="ECO:0000305" key="2"/>
<organism>
    <name type="scientific">Burkholderia multivorans (strain ATCC 17616 / 249)</name>
    <dbReference type="NCBI Taxonomy" id="395019"/>
    <lineage>
        <taxon>Bacteria</taxon>
        <taxon>Pseudomonadati</taxon>
        <taxon>Pseudomonadota</taxon>
        <taxon>Betaproteobacteria</taxon>
        <taxon>Burkholderiales</taxon>
        <taxon>Burkholderiaceae</taxon>
        <taxon>Burkholderia</taxon>
        <taxon>Burkholderia cepacia complex</taxon>
    </lineage>
</organism>
<feature type="chain" id="PRO_1000126880" description="Large ribosomal subunit protein bL9">
    <location>
        <begin position="1"/>
        <end position="150"/>
    </location>
</feature>